<gene>
    <name type="primary">fam168b</name>
    <name type="ORF">zgc:153980</name>
</gene>
<reference key="1">
    <citation type="submission" date="2006-09" db="EMBL/GenBank/DDBJ databases">
        <authorList>
            <consortium name="NIH - Zebrafish Gene Collection (ZGC) project"/>
        </authorList>
    </citation>
    <scope>NUCLEOTIDE SEQUENCE [LARGE SCALE MRNA]</scope>
</reference>
<name>F168B_DANRE</name>
<protein>
    <recommendedName>
        <fullName>Myelin-associated neurite-outgrowth inhibitor</fullName>
        <shortName>Mani</shortName>
    </recommendedName>
</protein>
<feature type="chain" id="PRO_0000325980" description="Myelin-associated neurite-outgrowth inhibitor">
    <location>
        <begin position="1"/>
        <end position="195"/>
    </location>
</feature>
<feature type="topological domain" description="Cytoplasmic" evidence="2">
    <location>
        <begin position="1"/>
        <end position="18"/>
    </location>
</feature>
<feature type="transmembrane region" description="Helical" evidence="2">
    <location>
        <begin position="19"/>
        <end position="43"/>
    </location>
</feature>
<feature type="topological domain" description="Extracellular" evidence="2">
    <location>
        <begin position="44"/>
        <end position="143"/>
    </location>
</feature>
<feature type="transmembrane region" description="Helical" evidence="2">
    <location>
        <begin position="144"/>
        <end position="163"/>
    </location>
</feature>
<feature type="topological domain" description="Cytoplasmic" evidence="2">
    <location>
        <begin position="164"/>
        <end position="195"/>
    </location>
</feature>
<keyword id="KW-1003">Cell membrane</keyword>
<keyword id="KW-0966">Cell projection</keyword>
<keyword id="KW-0963">Cytoplasm</keyword>
<keyword id="KW-0472">Membrane</keyword>
<keyword id="KW-1185">Reference proteome</keyword>
<keyword id="KW-0812">Transmembrane</keyword>
<keyword id="KW-1133">Transmembrane helix</keyword>
<evidence type="ECO:0000250" key="1">
    <source>
        <dbReference type="UniProtKB" id="D4AEP3"/>
    </source>
</evidence>
<evidence type="ECO:0000255" key="2"/>
<evidence type="ECO:0000305" key="3"/>
<dbReference type="EMBL" id="BC124506">
    <property type="protein sequence ID" value="AAI24507.1"/>
    <property type="molecule type" value="mRNA"/>
</dbReference>
<dbReference type="RefSeq" id="NP_001070037.1">
    <property type="nucleotide sequence ID" value="NM_001076569.1"/>
</dbReference>
<dbReference type="FunCoup" id="Q08BY2">
    <property type="interactions" value="1477"/>
</dbReference>
<dbReference type="STRING" id="7955.ENSDARP00000136356"/>
<dbReference type="PaxDb" id="7955-ENSDARP00000083361"/>
<dbReference type="Ensembl" id="ENSDART00000172473">
    <property type="protein sequence ID" value="ENSDARP00000136356"/>
    <property type="gene ID" value="ENSDARG00000101733"/>
</dbReference>
<dbReference type="GeneID" id="561051"/>
<dbReference type="KEGG" id="dre:561051"/>
<dbReference type="AGR" id="ZFIN:ZDB-GENE-060929-180"/>
<dbReference type="CTD" id="130074"/>
<dbReference type="ZFIN" id="ZDB-GENE-060929-180">
    <property type="gene designation" value="fam168b"/>
</dbReference>
<dbReference type="eggNOG" id="ENOG502QQDS">
    <property type="taxonomic scope" value="Eukaryota"/>
</dbReference>
<dbReference type="InParanoid" id="Q08BY2"/>
<dbReference type="OMA" id="MTVYPAP"/>
<dbReference type="OrthoDB" id="9893817at2759"/>
<dbReference type="PhylomeDB" id="Q08BY2"/>
<dbReference type="TreeFam" id="TF331128"/>
<dbReference type="PRO" id="PR:Q08BY2"/>
<dbReference type="Proteomes" id="UP000000437">
    <property type="component" value="Alternate scaffold 24"/>
</dbReference>
<dbReference type="Proteomes" id="UP000000437">
    <property type="component" value="Chromosome 24"/>
</dbReference>
<dbReference type="Bgee" id="ENSDARG00000101733">
    <property type="expression patterns" value="Expressed in cleaving embryo and 27 other cell types or tissues"/>
</dbReference>
<dbReference type="ExpressionAtlas" id="Q08BY2">
    <property type="expression patterns" value="baseline and differential"/>
</dbReference>
<dbReference type="GO" id="GO:0030424">
    <property type="term" value="C:axon"/>
    <property type="evidence" value="ECO:0007669"/>
    <property type="project" value="UniProtKB-SubCell"/>
</dbReference>
<dbReference type="GO" id="GO:0048471">
    <property type="term" value="C:perinuclear region of cytoplasm"/>
    <property type="evidence" value="ECO:0007669"/>
    <property type="project" value="UniProtKB-SubCell"/>
</dbReference>
<dbReference type="GO" id="GO:0005886">
    <property type="term" value="C:plasma membrane"/>
    <property type="evidence" value="ECO:0007669"/>
    <property type="project" value="UniProtKB-SubCell"/>
</dbReference>
<dbReference type="InterPro" id="IPR029247">
    <property type="entry name" value="FAM168A/MANI"/>
</dbReference>
<dbReference type="PANTHER" id="PTHR31844">
    <property type="entry name" value="MYELIN-ASSOCIATED NEURITE-OUTGROWTH INHIBITOR-RELATED"/>
    <property type="match status" value="1"/>
</dbReference>
<dbReference type="Pfam" id="PF14944">
    <property type="entry name" value="TCRP1"/>
    <property type="match status" value="2"/>
</dbReference>
<sequence length="195" mass="20398">MNPVYSPASSGVPYANPKGIGYPAGFPVGYAAAAPAYSPSMYPGANPAFPSGYAPGTPFKMSCSPTTGAVPPYSSSPNPYPAAVYPVRSPYPQQNPYAQQQGTYYTQPLYAAPPHVIHHTTVVQPNGMPAAMYAPPIPPPRPNGVTMGMVGGTTMAMSAGTLLTTHSPTPVAPHPSMPTYRQPATPTYSYVPPQW</sequence>
<organism>
    <name type="scientific">Danio rerio</name>
    <name type="common">Zebrafish</name>
    <name type="synonym">Brachydanio rerio</name>
    <dbReference type="NCBI Taxonomy" id="7955"/>
    <lineage>
        <taxon>Eukaryota</taxon>
        <taxon>Metazoa</taxon>
        <taxon>Chordata</taxon>
        <taxon>Craniata</taxon>
        <taxon>Vertebrata</taxon>
        <taxon>Euteleostomi</taxon>
        <taxon>Actinopterygii</taxon>
        <taxon>Neopterygii</taxon>
        <taxon>Teleostei</taxon>
        <taxon>Ostariophysi</taxon>
        <taxon>Cypriniformes</taxon>
        <taxon>Danionidae</taxon>
        <taxon>Danioninae</taxon>
        <taxon>Danio</taxon>
    </lineage>
</organism>
<comment type="function">
    <text evidence="1">Inhibitor of neuronal axonal outgrowth.</text>
</comment>
<comment type="subcellular location">
    <subcellularLocation>
        <location evidence="1">Cytoplasm</location>
        <location evidence="1">Perinuclear region</location>
    </subcellularLocation>
    <subcellularLocation>
        <location evidence="1">Cell membrane</location>
        <topology evidence="1">Multi-pass membrane protein</topology>
    </subcellularLocation>
    <subcellularLocation>
        <location evidence="1">Cell projection</location>
        <location evidence="1">Axon</location>
    </subcellularLocation>
</comment>
<comment type="similarity">
    <text evidence="3">Belongs to the FAM168 family.</text>
</comment>
<proteinExistence type="evidence at transcript level"/>
<accession>Q08BY2</accession>